<name>ATPD_ACHLI</name>
<protein>
    <recommendedName>
        <fullName evidence="1">ATP synthase subunit delta</fullName>
    </recommendedName>
    <alternativeName>
        <fullName evidence="1">ATP synthase F(1) sector subunit delta</fullName>
    </alternativeName>
    <alternativeName>
        <fullName evidence="1">F-type ATPase subunit delta</fullName>
        <shortName evidence="1">F-ATPase subunit delta</shortName>
    </alternativeName>
</protein>
<keyword id="KW-0066">ATP synthesis</keyword>
<keyword id="KW-1003">Cell membrane</keyword>
<keyword id="KW-0139">CF(1)</keyword>
<keyword id="KW-0375">Hydrogen ion transport</keyword>
<keyword id="KW-0406">Ion transport</keyword>
<keyword id="KW-0472">Membrane</keyword>
<keyword id="KW-1185">Reference proteome</keyword>
<keyword id="KW-0813">Transport</keyword>
<proteinExistence type="inferred from homology"/>
<dbReference type="EMBL" id="CP000896">
    <property type="protein sequence ID" value="ABX81595.1"/>
    <property type="molecule type" value="Genomic_DNA"/>
</dbReference>
<dbReference type="RefSeq" id="WP_012242926.1">
    <property type="nucleotide sequence ID" value="NC_010163.1"/>
</dbReference>
<dbReference type="SMR" id="A9NGW5"/>
<dbReference type="STRING" id="441768.ACL_0985"/>
<dbReference type="GeneID" id="41339131"/>
<dbReference type="KEGG" id="acl:ACL_0985"/>
<dbReference type="eggNOG" id="COG0712">
    <property type="taxonomic scope" value="Bacteria"/>
</dbReference>
<dbReference type="HOGENOM" id="CLU_085114_1_3_14"/>
<dbReference type="OrthoDB" id="384699at2"/>
<dbReference type="Proteomes" id="UP000008558">
    <property type="component" value="Chromosome"/>
</dbReference>
<dbReference type="GO" id="GO:0005886">
    <property type="term" value="C:plasma membrane"/>
    <property type="evidence" value="ECO:0007669"/>
    <property type="project" value="UniProtKB-SubCell"/>
</dbReference>
<dbReference type="GO" id="GO:0045259">
    <property type="term" value="C:proton-transporting ATP synthase complex"/>
    <property type="evidence" value="ECO:0007669"/>
    <property type="project" value="UniProtKB-KW"/>
</dbReference>
<dbReference type="GO" id="GO:0046933">
    <property type="term" value="F:proton-transporting ATP synthase activity, rotational mechanism"/>
    <property type="evidence" value="ECO:0007669"/>
    <property type="project" value="UniProtKB-UniRule"/>
</dbReference>
<dbReference type="Gene3D" id="1.10.520.20">
    <property type="entry name" value="N-terminal domain of the delta subunit of the F1F0-ATP synthase"/>
    <property type="match status" value="1"/>
</dbReference>
<dbReference type="HAMAP" id="MF_01416">
    <property type="entry name" value="ATP_synth_delta_bact"/>
    <property type="match status" value="1"/>
</dbReference>
<dbReference type="InterPro" id="IPR026015">
    <property type="entry name" value="ATP_synth_OSCP/delta_N_sf"/>
</dbReference>
<dbReference type="InterPro" id="IPR000711">
    <property type="entry name" value="ATPase_OSCP/dsu"/>
</dbReference>
<dbReference type="NCBIfam" id="TIGR01145">
    <property type="entry name" value="ATP_synt_delta"/>
    <property type="match status" value="1"/>
</dbReference>
<dbReference type="PANTHER" id="PTHR11910">
    <property type="entry name" value="ATP SYNTHASE DELTA CHAIN"/>
    <property type="match status" value="1"/>
</dbReference>
<dbReference type="Pfam" id="PF00213">
    <property type="entry name" value="OSCP"/>
    <property type="match status" value="1"/>
</dbReference>
<dbReference type="PRINTS" id="PR00125">
    <property type="entry name" value="ATPASEDELTA"/>
</dbReference>
<dbReference type="SUPFAM" id="SSF47928">
    <property type="entry name" value="N-terminal domain of the delta subunit of the F1F0-ATP synthase"/>
    <property type="match status" value="1"/>
</dbReference>
<reference key="1">
    <citation type="journal article" date="2011" name="J. Bacteriol.">
        <title>Complete genome and proteome of Acholeplasma laidlawii.</title>
        <authorList>
            <person name="Lazarev V.N."/>
            <person name="Levitskii S.A."/>
            <person name="Basovskii Y.I."/>
            <person name="Chukin M.M."/>
            <person name="Akopian T.A."/>
            <person name="Vereshchagin V.V."/>
            <person name="Kostrjukova E.S."/>
            <person name="Kovaleva G.Y."/>
            <person name="Kazanov M.D."/>
            <person name="Malko D.B."/>
            <person name="Vitreschak A.G."/>
            <person name="Sernova N.V."/>
            <person name="Gelfand M.S."/>
            <person name="Demina I.A."/>
            <person name="Serebryakova M.V."/>
            <person name="Galyamina M.A."/>
            <person name="Vtyurin N.N."/>
            <person name="Rogov S.I."/>
            <person name="Alexeev D.G."/>
            <person name="Ladygina V.G."/>
            <person name="Govorun V.M."/>
        </authorList>
    </citation>
    <scope>NUCLEOTIDE SEQUENCE [LARGE SCALE GENOMIC DNA]</scope>
    <source>
        <strain>PG-8A</strain>
    </source>
</reference>
<evidence type="ECO:0000255" key="1">
    <source>
        <dbReference type="HAMAP-Rule" id="MF_01416"/>
    </source>
</evidence>
<feature type="chain" id="PRO_0000382047" description="ATP synthase subunit delta">
    <location>
        <begin position="1"/>
        <end position="171"/>
    </location>
</feature>
<accession>A9NGW5</accession>
<comment type="function">
    <text evidence="1">F(1)F(0) ATP synthase produces ATP from ADP in the presence of a proton or sodium gradient. F-type ATPases consist of two structural domains, F(1) containing the extramembraneous catalytic core and F(0) containing the membrane proton channel, linked together by a central stalk and a peripheral stalk. During catalysis, ATP synthesis in the catalytic domain of F(1) is coupled via a rotary mechanism of the central stalk subunits to proton translocation.</text>
</comment>
<comment type="function">
    <text evidence="1">This protein is part of the stalk that links CF(0) to CF(1). It either transmits conformational changes from CF(0) to CF(1) or is implicated in proton conduction.</text>
</comment>
<comment type="subunit">
    <text evidence="1">F-type ATPases have 2 components, F(1) - the catalytic core - and F(0) - the membrane proton channel. F(1) has five subunits: alpha(3), beta(3), gamma(1), delta(1), epsilon(1). F(0) has three main subunits: a(1), b(2) and c(10-14). The alpha and beta chains form an alternating ring which encloses part of the gamma chain. F(1) is attached to F(0) by a central stalk formed by the gamma and epsilon chains, while a peripheral stalk is formed by the delta and b chains.</text>
</comment>
<comment type="subcellular location">
    <subcellularLocation>
        <location evidence="1">Cell membrane</location>
        <topology evidence="1">Peripheral membrane protein</topology>
    </subcellularLocation>
</comment>
<comment type="similarity">
    <text evidence="1">Belongs to the ATPase delta chain family.</text>
</comment>
<sequence length="171" mass="20220">MTSTIYSDALFKLALKEDAIESIIEQFETFVSLARDYPDWIVLLDSPMIRNRVKNKMLTELGIFDALFMNFLMLLVRHHQVRLYEDIYEQWIAKSRLNQKIAYVQLYSAKPLSKKRLNQLKEEIQDYLPGLEIEFNQHIDPTLIEGVKMTYQGRSIERSLKKALDDMRTNI</sequence>
<organism>
    <name type="scientific">Acholeplasma laidlawii (strain PG-8A)</name>
    <dbReference type="NCBI Taxonomy" id="441768"/>
    <lineage>
        <taxon>Bacteria</taxon>
        <taxon>Bacillati</taxon>
        <taxon>Mycoplasmatota</taxon>
        <taxon>Mollicutes</taxon>
        <taxon>Acholeplasmatales</taxon>
        <taxon>Acholeplasmataceae</taxon>
        <taxon>Acholeplasma</taxon>
    </lineage>
</organism>
<gene>
    <name evidence="1" type="primary">atpH</name>
    <name type="ordered locus">ACL_0985</name>
</gene>